<keyword id="KW-0325">Glycoprotein</keyword>
<keyword id="KW-0406">Ion transport</keyword>
<keyword id="KW-0472">Membrane</keyword>
<keyword id="KW-1185">Reference proteome</keyword>
<keyword id="KW-0812">Transmembrane</keyword>
<keyword id="KW-1133">Transmembrane helix</keyword>
<keyword id="KW-0813">Transport</keyword>
<gene>
    <name type="primary">Slc22a23</name>
    <name type="synonym">Nritp</name>
</gene>
<protein>
    <recommendedName>
        <fullName>Solute carrier family 22 member 23</fullName>
    </recommendedName>
    <alternativeName>
        <fullName>Ion transporter protein</fullName>
    </alternativeName>
</protein>
<reference key="1">
    <citation type="journal article" date="2004" name="Nature">
        <title>Genome sequence of the Brown Norway rat yields insights into mammalian evolution.</title>
        <authorList>
            <person name="Gibbs R.A."/>
            <person name="Weinstock G.M."/>
            <person name="Metzker M.L."/>
            <person name="Muzny D.M."/>
            <person name="Sodergren E.J."/>
            <person name="Scherer S."/>
            <person name="Scott G."/>
            <person name="Steffen D."/>
            <person name="Worley K.C."/>
            <person name="Burch P.E."/>
            <person name="Okwuonu G."/>
            <person name="Hines S."/>
            <person name="Lewis L."/>
            <person name="Deramo C."/>
            <person name="Delgado O."/>
            <person name="Dugan-Rocha S."/>
            <person name="Miner G."/>
            <person name="Morgan M."/>
            <person name="Hawes A."/>
            <person name="Gill R."/>
            <person name="Holt R.A."/>
            <person name="Adams M.D."/>
            <person name="Amanatides P.G."/>
            <person name="Baden-Tillson H."/>
            <person name="Barnstead M."/>
            <person name="Chin S."/>
            <person name="Evans C.A."/>
            <person name="Ferriera S."/>
            <person name="Fosler C."/>
            <person name="Glodek A."/>
            <person name="Gu Z."/>
            <person name="Jennings D."/>
            <person name="Kraft C.L."/>
            <person name="Nguyen T."/>
            <person name="Pfannkoch C.M."/>
            <person name="Sitter C."/>
            <person name="Sutton G.G."/>
            <person name="Venter J.C."/>
            <person name="Woodage T."/>
            <person name="Smith D."/>
            <person name="Lee H.-M."/>
            <person name="Gustafson E."/>
            <person name="Cahill P."/>
            <person name="Kana A."/>
            <person name="Doucette-Stamm L."/>
            <person name="Weinstock K."/>
            <person name="Fechtel K."/>
            <person name="Weiss R.B."/>
            <person name="Dunn D.M."/>
            <person name="Green E.D."/>
            <person name="Blakesley R.W."/>
            <person name="Bouffard G.G."/>
            <person name="De Jong P.J."/>
            <person name="Osoegawa K."/>
            <person name="Zhu B."/>
            <person name="Marra M."/>
            <person name="Schein J."/>
            <person name="Bosdet I."/>
            <person name="Fjell C."/>
            <person name="Jones S."/>
            <person name="Krzywinski M."/>
            <person name="Mathewson C."/>
            <person name="Siddiqui A."/>
            <person name="Wye N."/>
            <person name="McPherson J."/>
            <person name="Zhao S."/>
            <person name="Fraser C.M."/>
            <person name="Shetty J."/>
            <person name="Shatsman S."/>
            <person name="Geer K."/>
            <person name="Chen Y."/>
            <person name="Abramzon S."/>
            <person name="Nierman W.C."/>
            <person name="Havlak P.H."/>
            <person name="Chen R."/>
            <person name="Durbin K.J."/>
            <person name="Egan A."/>
            <person name="Ren Y."/>
            <person name="Song X.-Z."/>
            <person name="Li B."/>
            <person name="Liu Y."/>
            <person name="Qin X."/>
            <person name="Cawley S."/>
            <person name="Cooney A.J."/>
            <person name="D'Souza L.M."/>
            <person name="Martin K."/>
            <person name="Wu J.Q."/>
            <person name="Gonzalez-Garay M.L."/>
            <person name="Jackson A.R."/>
            <person name="Kalafus K.J."/>
            <person name="McLeod M.P."/>
            <person name="Milosavljevic A."/>
            <person name="Virk D."/>
            <person name="Volkov A."/>
            <person name="Wheeler D.A."/>
            <person name="Zhang Z."/>
            <person name="Bailey J.A."/>
            <person name="Eichler E.E."/>
            <person name="Tuzun E."/>
            <person name="Birney E."/>
            <person name="Mongin E."/>
            <person name="Ureta-Vidal A."/>
            <person name="Woodwark C."/>
            <person name="Zdobnov E."/>
            <person name="Bork P."/>
            <person name="Suyama M."/>
            <person name="Torrents D."/>
            <person name="Alexandersson M."/>
            <person name="Trask B.J."/>
            <person name="Young J.M."/>
            <person name="Huang H."/>
            <person name="Wang H."/>
            <person name="Xing H."/>
            <person name="Daniels S."/>
            <person name="Gietzen D."/>
            <person name="Schmidt J."/>
            <person name="Stevens K."/>
            <person name="Vitt U."/>
            <person name="Wingrove J."/>
            <person name="Camara F."/>
            <person name="Mar Alba M."/>
            <person name="Abril J.F."/>
            <person name="Guigo R."/>
            <person name="Smit A."/>
            <person name="Dubchak I."/>
            <person name="Rubin E.M."/>
            <person name="Couronne O."/>
            <person name="Poliakov A."/>
            <person name="Huebner N."/>
            <person name="Ganten D."/>
            <person name="Goesele C."/>
            <person name="Hummel O."/>
            <person name="Kreitler T."/>
            <person name="Lee Y.-A."/>
            <person name="Monti J."/>
            <person name="Schulz H."/>
            <person name="Zimdahl H."/>
            <person name="Himmelbauer H."/>
            <person name="Lehrach H."/>
            <person name="Jacob H.J."/>
            <person name="Bromberg S."/>
            <person name="Gullings-Handley J."/>
            <person name="Jensen-Seaman M.I."/>
            <person name="Kwitek A.E."/>
            <person name="Lazar J."/>
            <person name="Pasko D."/>
            <person name="Tonellato P.J."/>
            <person name="Twigger S."/>
            <person name="Ponting C.P."/>
            <person name="Duarte J.M."/>
            <person name="Rice S."/>
            <person name="Goodstadt L."/>
            <person name="Beatson S.A."/>
            <person name="Emes R.D."/>
            <person name="Winter E.E."/>
            <person name="Webber C."/>
            <person name="Brandt P."/>
            <person name="Nyakatura G."/>
            <person name="Adetobi M."/>
            <person name="Chiaromonte F."/>
            <person name="Elnitski L."/>
            <person name="Eswara P."/>
            <person name="Hardison R.C."/>
            <person name="Hou M."/>
            <person name="Kolbe D."/>
            <person name="Makova K."/>
            <person name="Miller W."/>
            <person name="Nekrutenko A."/>
            <person name="Riemer C."/>
            <person name="Schwartz S."/>
            <person name="Taylor J."/>
            <person name="Yang S."/>
            <person name="Zhang Y."/>
            <person name="Lindpaintner K."/>
            <person name="Andrews T.D."/>
            <person name="Caccamo M."/>
            <person name="Clamp M."/>
            <person name="Clarke L."/>
            <person name="Curwen V."/>
            <person name="Durbin R.M."/>
            <person name="Eyras E."/>
            <person name="Searle S.M."/>
            <person name="Cooper G.M."/>
            <person name="Batzoglou S."/>
            <person name="Brudno M."/>
            <person name="Sidow A."/>
            <person name="Stone E.A."/>
            <person name="Payseur B.A."/>
            <person name="Bourque G."/>
            <person name="Lopez-Otin C."/>
            <person name="Puente X.S."/>
            <person name="Chakrabarti K."/>
            <person name="Chatterji S."/>
            <person name="Dewey C."/>
            <person name="Pachter L."/>
            <person name="Bray N."/>
            <person name="Yap V.B."/>
            <person name="Caspi A."/>
            <person name="Tesler G."/>
            <person name="Pevzner P.A."/>
            <person name="Haussler D."/>
            <person name="Roskin K.M."/>
            <person name="Baertsch R."/>
            <person name="Clawson H."/>
            <person name="Furey T.S."/>
            <person name="Hinrichs A.S."/>
            <person name="Karolchik D."/>
            <person name="Kent W.J."/>
            <person name="Rosenbloom K.R."/>
            <person name="Trumbower H."/>
            <person name="Weirauch M."/>
            <person name="Cooper D.N."/>
            <person name="Stenson P.D."/>
            <person name="Ma B."/>
            <person name="Brent M."/>
            <person name="Arumugam M."/>
            <person name="Shteynberg D."/>
            <person name="Copley R.R."/>
            <person name="Taylor M.S."/>
            <person name="Riethman H."/>
            <person name="Mudunuri U."/>
            <person name="Peterson J."/>
            <person name="Guyer M."/>
            <person name="Felsenfeld A."/>
            <person name="Old S."/>
            <person name="Mockrin S."/>
            <person name="Collins F.S."/>
        </authorList>
    </citation>
    <scope>NUCLEOTIDE SEQUENCE [LARGE SCALE GENOMIC DNA]</scope>
    <source>
        <strain>Brown Norway</strain>
    </source>
</reference>
<reference key="2">
    <citation type="journal article" date="2000" name="Brain Res. Mol. Brain Res.">
        <title>Expression of the GDNF family members and their receptors in the mature rat cochlea.</title>
        <authorList>
            <person name="Stoever T."/>
            <person name="Gong T.-W.L."/>
            <person name="Cho Y."/>
            <person name="Altschuler R.A."/>
            <person name="Lomax M.I."/>
        </authorList>
    </citation>
    <scope>NUCLEOTIDE SEQUENCE [MRNA] OF 327-689</scope>
    <source>
        <strain>Sprague-Dawley</strain>
        <tissue>Cochlea</tissue>
    </source>
</reference>
<reference key="3">
    <citation type="journal article" date="2007" name="Genomics">
        <title>Identification of six putative human transporters with structural similarity to the drug transporter SLC22 family.</title>
        <authorList>
            <person name="Jacobsson J.A."/>
            <person name="Haitina T."/>
            <person name="Lindblom J."/>
            <person name="Fredriksson R."/>
        </authorList>
    </citation>
    <scope>IDENTIFICATION</scope>
    <scope>TISSUE SPECIFICITY</scope>
</reference>
<proteinExistence type="evidence at transcript level"/>
<sequence>MAIDRRREAAGSGAGRQPAPAEENGSLPPGDAAASAPLGGRAGSGGSAEIQPLPALHPSGGPHSSCCAAAAAPSLLLLDYDGSVLPFLGGLGGGYQKTLVVLTWIPALFIGFSQFSDSFLLDQPNFWCHGAGKGTELAGATVTGRWGDMGNWTSPSATPFSTASWGTTSNRSNSSDTPPLPSPPGKGNNDSNCECHAWDYGIRTGLVQNVVSKWDLVCDNAWKVHVAKFSLLVGLIFGYLITGCIADWVGRRPVLLFSVIFILIFGLTVALSVNVTMFSTLRFFEGFCLAGIILTLYALRIELCPPGKRFIITMVASFVAMAGQFLMPGLAALCRDWQVLQALIICPFLLMLLYWSIFPESLRWLMATQQFESAKKLILYLTQKNCVSPESDIKGVMPELEKELSRRPKKVCIVKVVGTRNLWKNIVVLCVNSLTGYGIHHCFARSMMGHEVKVPLLENFYADYYTMASIALASCLAMCLVVRFLGRRGGLLLFMILTALASLLQLGLLNLIGKYSQHPDSELQLKLAVGMSDSVKDKFSIAFSIVGMFASHAVGSLSVFFCAEITPTVIRCGGLGLVLASAGFGMLTAPIIELHNQKGYFLHHIIFACCTLICIICILLLPESRDQNLPENIANGEHYTRQPLLSHKKGEQPLLLTNAELKDYSGLHDVAAVGDGLSEGATANGMKTM</sequence>
<evidence type="ECO:0000255" key="1"/>
<evidence type="ECO:0000256" key="2">
    <source>
        <dbReference type="SAM" id="MobiDB-lite"/>
    </source>
</evidence>
<evidence type="ECO:0000269" key="3">
    <source>
    </source>
</evidence>
<evidence type="ECO:0000305" key="4"/>
<accession>Q9QZG1</accession>
<feature type="chain" id="PRO_0000308317" description="Solute carrier family 22 member 23">
    <location>
        <begin position="1"/>
        <end position="689"/>
    </location>
</feature>
<feature type="transmembrane region" description="Helical" evidence="1">
    <location>
        <begin position="229"/>
        <end position="249"/>
    </location>
</feature>
<feature type="transmembrane region" description="Helical" evidence="1">
    <location>
        <begin position="253"/>
        <end position="273"/>
    </location>
</feature>
<feature type="transmembrane region" description="Helical" evidence="1">
    <location>
        <begin position="283"/>
        <end position="303"/>
    </location>
</feature>
<feature type="transmembrane region" description="Helical" evidence="1">
    <location>
        <begin position="310"/>
        <end position="330"/>
    </location>
</feature>
<feature type="transmembrane region" description="Helical" evidence="1">
    <location>
        <begin position="339"/>
        <end position="359"/>
    </location>
</feature>
<feature type="transmembrane region" description="Helical" evidence="1">
    <location>
        <begin position="462"/>
        <end position="482"/>
    </location>
</feature>
<feature type="transmembrane region" description="Helical" evidence="1">
    <location>
        <begin position="489"/>
        <end position="509"/>
    </location>
</feature>
<feature type="transmembrane region" description="Helical" evidence="1">
    <location>
        <begin position="541"/>
        <end position="561"/>
    </location>
</feature>
<feature type="transmembrane region" description="Helical" evidence="1">
    <location>
        <begin position="572"/>
        <end position="592"/>
    </location>
</feature>
<feature type="transmembrane region" description="Helical" evidence="1">
    <location>
        <begin position="601"/>
        <end position="621"/>
    </location>
</feature>
<feature type="region of interest" description="Disordered" evidence="2">
    <location>
        <begin position="1"/>
        <end position="55"/>
    </location>
</feature>
<feature type="region of interest" description="Disordered" evidence="2">
    <location>
        <begin position="162"/>
        <end position="188"/>
    </location>
</feature>
<feature type="compositionally biased region" description="Polar residues" evidence="2">
    <location>
        <begin position="165"/>
        <end position="177"/>
    </location>
</feature>
<feature type="glycosylation site" description="N-linked (GlcNAc...) asparagine" evidence="1">
    <location>
        <position position="24"/>
    </location>
</feature>
<feature type="glycosylation site" description="N-linked (GlcNAc...) asparagine" evidence="1">
    <location>
        <position position="274"/>
    </location>
</feature>
<feature type="sequence conflict" description="In Ref. 2; AAF01243." evidence="4" ref="2">
    <original>MP</original>
    <variation>AT</variation>
    <location>
        <begin position="327"/>
        <end position="328"/>
    </location>
</feature>
<feature type="sequence conflict" description="In Ref. 2; AAF01243." evidence="4" ref="2">
    <original>S</original>
    <variation>G</variation>
    <location>
        <position position="388"/>
    </location>
</feature>
<feature type="sequence conflict" description="In Ref. 2; AAF01243." evidence="4" ref="2">
    <location>
        <begin position="522"/>
        <end position="529"/>
    </location>
</feature>
<name>S22AN_RAT</name>
<organism>
    <name type="scientific">Rattus norvegicus</name>
    <name type="common">Rat</name>
    <dbReference type="NCBI Taxonomy" id="10116"/>
    <lineage>
        <taxon>Eukaryota</taxon>
        <taxon>Metazoa</taxon>
        <taxon>Chordata</taxon>
        <taxon>Craniata</taxon>
        <taxon>Vertebrata</taxon>
        <taxon>Euteleostomi</taxon>
        <taxon>Mammalia</taxon>
        <taxon>Eutheria</taxon>
        <taxon>Euarchontoglires</taxon>
        <taxon>Glires</taxon>
        <taxon>Rodentia</taxon>
        <taxon>Myomorpha</taxon>
        <taxon>Muroidea</taxon>
        <taxon>Muridae</taxon>
        <taxon>Murinae</taxon>
        <taxon>Rattus</taxon>
    </lineage>
</organism>
<dbReference type="EMBL" id="AABR03104826">
    <property type="status" value="NOT_ANNOTATED_CDS"/>
    <property type="molecule type" value="Genomic_DNA"/>
</dbReference>
<dbReference type="EMBL" id="AABR03104847">
    <property type="status" value="NOT_ANNOTATED_CDS"/>
    <property type="molecule type" value="Genomic_DNA"/>
</dbReference>
<dbReference type="EMBL" id="AABR03105090">
    <property type="status" value="NOT_ANNOTATED_CDS"/>
    <property type="molecule type" value="Genomic_DNA"/>
</dbReference>
<dbReference type="EMBL" id="AABR03105777">
    <property type="status" value="NOT_ANNOTATED_CDS"/>
    <property type="molecule type" value="Genomic_DNA"/>
</dbReference>
<dbReference type="EMBL" id="AABR03106468">
    <property type="status" value="NOT_ANNOTATED_CDS"/>
    <property type="molecule type" value="Genomic_DNA"/>
</dbReference>
<dbReference type="EMBL" id="AF184921">
    <property type="protein sequence ID" value="AAF01243.1"/>
    <property type="molecule type" value="mRNA"/>
</dbReference>
<dbReference type="RefSeq" id="NP_072146.1">
    <property type="nucleotide sequence ID" value="NM_022624.1"/>
</dbReference>
<dbReference type="SMR" id="Q9QZG1"/>
<dbReference type="BioGRID" id="249140">
    <property type="interactions" value="1"/>
</dbReference>
<dbReference type="FunCoup" id="Q9QZG1">
    <property type="interactions" value="385"/>
</dbReference>
<dbReference type="STRING" id="10116.ENSRNOP00000023149"/>
<dbReference type="GlyCosmos" id="Q9QZG1">
    <property type="glycosylation" value="2 sites, No reported glycans"/>
</dbReference>
<dbReference type="GlyGen" id="Q9QZG1">
    <property type="glycosylation" value="2 sites"/>
</dbReference>
<dbReference type="PhosphoSitePlus" id="Q9QZG1"/>
<dbReference type="PaxDb" id="10116-ENSRNOP00000023149"/>
<dbReference type="Ensembl" id="ENSRNOT00000023149.6">
    <property type="protein sequence ID" value="ENSRNOP00000023149.5"/>
    <property type="gene ID" value="ENSRNOG00000017210.7"/>
</dbReference>
<dbReference type="GeneID" id="64559"/>
<dbReference type="KEGG" id="rno:64559"/>
<dbReference type="UCSC" id="RGD:620302">
    <property type="organism name" value="rat"/>
</dbReference>
<dbReference type="AGR" id="RGD:620302"/>
<dbReference type="CTD" id="63027"/>
<dbReference type="RGD" id="620302">
    <property type="gene designation" value="Slc22a23"/>
</dbReference>
<dbReference type="eggNOG" id="KOG0255">
    <property type="taxonomic scope" value="Eukaryota"/>
</dbReference>
<dbReference type="GeneTree" id="ENSGT00940000157354"/>
<dbReference type="HOGENOM" id="CLU_001265_33_6_1"/>
<dbReference type="InParanoid" id="Q9QZG1"/>
<dbReference type="OMA" id="QKNCISP"/>
<dbReference type="OrthoDB" id="6884957at2759"/>
<dbReference type="PhylomeDB" id="Q9QZG1"/>
<dbReference type="TreeFam" id="TF335753"/>
<dbReference type="PRO" id="PR:Q9QZG1"/>
<dbReference type="Proteomes" id="UP000002494">
    <property type="component" value="Chromosome 17"/>
</dbReference>
<dbReference type="Bgee" id="ENSRNOG00000017210">
    <property type="expression patterns" value="Expressed in liver and 18 other cell types or tissues"/>
</dbReference>
<dbReference type="GO" id="GO:0016020">
    <property type="term" value="C:membrane"/>
    <property type="evidence" value="ECO:0007669"/>
    <property type="project" value="UniProtKB-SubCell"/>
</dbReference>
<dbReference type="GO" id="GO:0022857">
    <property type="term" value="F:transmembrane transporter activity"/>
    <property type="evidence" value="ECO:0007669"/>
    <property type="project" value="InterPro"/>
</dbReference>
<dbReference type="GO" id="GO:0006811">
    <property type="term" value="P:monoatomic ion transport"/>
    <property type="evidence" value="ECO:0007669"/>
    <property type="project" value="UniProtKB-KW"/>
</dbReference>
<dbReference type="CDD" id="cd17444">
    <property type="entry name" value="MFS_SLC22A23"/>
    <property type="match status" value="1"/>
</dbReference>
<dbReference type="Gene3D" id="1.20.1250.20">
    <property type="entry name" value="MFS general substrate transporter like domains"/>
    <property type="match status" value="1"/>
</dbReference>
<dbReference type="InterPro" id="IPR005828">
    <property type="entry name" value="MFS_sugar_transport-like"/>
</dbReference>
<dbReference type="InterPro" id="IPR036259">
    <property type="entry name" value="MFS_trans_sf"/>
</dbReference>
<dbReference type="InterPro" id="IPR005829">
    <property type="entry name" value="Sugar_transporter_CS"/>
</dbReference>
<dbReference type="PANTHER" id="PTHR24064">
    <property type="entry name" value="SOLUTE CARRIER FAMILY 22 MEMBER"/>
    <property type="match status" value="1"/>
</dbReference>
<dbReference type="Pfam" id="PF00083">
    <property type="entry name" value="Sugar_tr"/>
    <property type="match status" value="1"/>
</dbReference>
<dbReference type="SUPFAM" id="SSF103473">
    <property type="entry name" value="MFS general substrate transporter"/>
    <property type="match status" value="1"/>
</dbReference>
<dbReference type="PROSITE" id="PS00216">
    <property type="entry name" value="SUGAR_TRANSPORT_1"/>
    <property type="match status" value="1"/>
</dbReference>
<comment type="subcellular location">
    <subcellularLocation>
        <location evidence="4">Membrane</location>
        <topology evidence="4">Multi-pass membrane protein</topology>
    </subcellularLocation>
</comment>
<comment type="tissue specificity">
    <text evidence="3">Expressed in many tissues, including brain, spinal cord, kidney, liver, eye, adipose tissue, lung, epididymis, adrenal gland, pineal gland, skeletal muscle, heart, spleen, thymus, ovary, uterus, testis and epididymis.</text>
</comment>
<comment type="similarity">
    <text evidence="4">Belongs to the major facilitator (TC 2.A.1) superfamily. Organic cation transporter (TC 2.A.1.19) family.</text>
</comment>